<gene>
    <name evidence="1" type="primary">rnfA</name>
    <name type="ordered locus">Spro_2241</name>
</gene>
<proteinExistence type="inferred from homology"/>
<organism>
    <name type="scientific">Serratia proteamaculans (strain 568)</name>
    <dbReference type="NCBI Taxonomy" id="399741"/>
    <lineage>
        <taxon>Bacteria</taxon>
        <taxon>Pseudomonadati</taxon>
        <taxon>Pseudomonadota</taxon>
        <taxon>Gammaproteobacteria</taxon>
        <taxon>Enterobacterales</taxon>
        <taxon>Yersiniaceae</taxon>
        <taxon>Serratia</taxon>
    </lineage>
</organism>
<evidence type="ECO:0000255" key="1">
    <source>
        <dbReference type="HAMAP-Rule" id="MF_00459"/>
    </source>
</evidence>
<reference key="1">
    <citation type="submission" date="2007-09" db="EMBL/GenBank/DDBJ databases">
        <title>Complete sequence of chromosome of Serratia proteamaculans 568.</title>
        <authorList>
            <consortium name="US DOE Joint Genome Institute"/>
            <person name="Copeland A."/>
            <person name="Lucas S."/>
            <person name="Lapidus A."/>
            <person name="Barry K."/>
            <person name="Glavina del Rio T."/>
            <person name="Dalin E."/>
            <person name="Tice H."/>
            <person name="Pitluck S."/>
            <person name="Chain P."/>
            <person name="Malfatti S."/>
            <person name="Shin M."/>
            <person name="Vergez L."/>
            <person name="Schmutz J."/>
            <person name="Larimer F."/>
            <person name="Land M."/>
            <person name="Hauser L."/>
            <person name="Kyrpides N."/>
            <person name="Kim E."/>
            <person name="Taghavi S."/>
            <person name="Newman L."/>
            <person name="Vangronsveld J."/>
            <person name="van der Lelie D."/>
            <person name="Richardson P."/>
        </authorList>
    </citation>
    <scope>NUCLEOTIDE SEQUENCE [LARGE SCALE GENOMIC DNA]</scope>
    <source>
        <strain>568</strain>
    </source>
</reference>
<protein>
    <recommendedName>
        <fullName evidence="1">Ion-translocating oxidoreductase complex subunit A</fullName>
        <ecNumber evidence="1">7.-.-.-</ecNumber>
    </recommendedName>
    <alternativeName>
        <fullName evidence="1">Rnf electron transport complex subunit A</fullName>
    </alternativeName>
</protein>
<dbReference type="EC" id="7.-.-.-" evidence="1"/>
<dbReference type="EMBL" id="CP000826">
    <property type="protein sequence ID" value="ABV41342.1"/>
    <property type="molecule type" value="Genomic_DNA"/>
</dbReference>
<dbReference type="SMR" id="A8GE02"/>
<dbReference type="STRING" id="399741.Spro_2241"/>
<dbReference type="KEGG" id="spe:Spro_2241"/>
<dbReference type="eggNOG" id="COG4657">
    <property type="taxonomic scope" value="Bacteria"/>
</dbReference>
<dbReference type="HOGENOM" id="CLU_095255_1_0_6"/>
<dbReference type="OrthoDB" id="9803631at2"/>
<dbReference type="GO" id="GO:0005886">
    <property type="term" value="C:plasma membrane"/>
    <property type="evidence" value="ECO:0007669"/>
    <property type="project" value="UniProtKB-SubCell"/>
</dbReference>
<dbReference type="GO" id="GO:0022900">
    <property type="term" value="P:electron transport chain"/>
    <property type="evidence" value="ECO:0007669"/>
    <property type="project" value="UniProtKB-UniRule"/>
</dbReference>
<dbReference type="HAMAP" id="MF_00459">
    <property type="entry name" value="RsxA_RnfA"/>
    <property type="match status" value="1"/>
</dbReference>
<dbReference type="InterPro" id="IPR011293">
    <property type="entry name" value="Ion_transpt_RnfA/RsxA"/>
</dbReference>
<dbReference type="InterPro" id="IPR003667">
    <property type="entry name" value="NqrDE/RnfAE"/>
</dbReference>
<dbReference type="InterPro" id="IPR050133">
    <property type="entry name" value="NqrDE/RnfAE_oxidrdctase"/>
</dbReference>
<dbReference type="NCBIfam" id="NF003481">
    <property type="entry name" value="PRK05151.1"/>
    <property type="match status" value="1"/>
</dbReference>
<dbReference type="NCBIfam" id="TIGR01943">
    <property type="entry name" value="rnfA"/>
    <property type="match status" value="1"/>
</dbReference>
<dbReference type="PANTHER" id="PTHR30335">
    <property type="entry name" value="INTEGRAL MEMBRANE PROTEIN OF SOXR-REDUCING COMPLEX"/>
    <property type="match status" value="1"/>
</dbReference>
<dbReference type="PANTHER" id="PTHR30335:SF0">
    <property type="entry name" value="ION-TRANSLOCATING OXIDOREDUCTASE COMPLEX SUBUNIT A"/>
    <property type="match status" value="1"/>
</dbReference>
<dbReference type="Pfam" id="PF02508">
    <property type="entry name" value="Rnf-Nqr"/>
    <property type="match status" value="1"/>
</dbReference>
<dbReference type="PIRSF" id="PIRSF006102">
    <property type="entry name" value="NQR_DE"/>
    <property type="match status" value="1"/>
</dbReference>
<feature type="chain" id="PRO_1000060330" description="Ion-translocating oxidoreductase complex subunit A">
    <location>
        <begin position="1"/>
        <end position="193"/>
    </location>
</feature>
<feature type="transmembrane region" description="Helical" evidence="1">
    <location>
        <begin position="5"/>
        <end position="25"/>
    </location>
</feature>
<feature type="transmembrane region" description="Helical" evidence="1">
    <location>
        <begin position="47"/>
        <end position="67"/>
    </location>
</feature>
<feature type="transmembrane region" description="Helical" evidence="1">
    <location>
        <begin position="72"/>
        <end position="92"/>
    </location>
</feature>
<feature type="transmembrane region" description="Helical" evidence="1">
    <location>
        <begin position="102"/>
        <end position="122"/>
    </location>
</feature>
<feature type="transmembrane region" description="Helical" evidence="1">
    <location>
        <begin position="134"/>
        <end position="154"/>
    </location>
</feature>
<feature type="transmembrane region" description="Helical" evidence="1">
    <location>
        <begin position="171"/>
        <end position="191"/>
    </location>
</feature>
<comment type="function">
    <text evidence="1">Part of a membrane-bound complex that couples electron transfer with translocation of ions across the membrane.</text>
</comment>
<comment type="subunit">
    <text evidence="1">The complex is composed of six subunits: RnfA, RnfB, RnfC, RnfD, RnfE and RnfG.</text>
</comment>
<comment type="subcellular location">
    <subcellularLocation>
        <location evidence="1">Cell inner membrane</location>
        <topology evidence="1">Multi-pass membrane protein</topology>
    </subcellularLocation>
</comment>
<comment type="similarity">
    <text evidence="1">Belongs to the NqrDE/RnfAE family.</text>
</comment>
<name>RNFA_SERP5</name>
<keyword id="KW-0997">Cell inner membrane</keyword>
<keyword id="KW-1003">Cell membrane</keyword>
<keyword id="KW-0249">Electron transport</keyword>
<keyword id="KW-0472">Membrane</keyword>
<keyword id="KW-1278">Translocase</keyword>
<keyword id="KW-0812">Transmembrane</keyword>
<keyword id="KW-1133">Transmembrane helix</keyword>
<keyword id="KW-0813">Transport</keyword>
<accession>A8GE02</accession>
<sequence>MTEYLLLFVGTVLVNNFVLVKFLGLCPFLGVSKKLESAIGMGMATTFVMTLASVSAWVINTFILVPLDLVYLRTLSFILVIAVVVQFTEMVVRKTSPALYRLLGIFLPLITTNCAVLGVALLNVNLGYNFLQSAVYGFSAAAGFSLVMVLFAAIRERLAVADVPAPFRGSSIALITAGLMSLAFMGFTGLVKF</sequence>